<proteinExistence type="evidence at protein level"/>
<name>DLG1_DROME</name>
<dbReference type="EMBL" id="M73529">
    <property type="protein sequence ID" value="AAA28468.1"/>
    <property type="molecule type" value="mRNA"/>
</dbReference>
<dbReference type="EMBL" id="AY332243">
    <property type="protein sequence ID" value="AAQ01226.1"/>
    <property type="molecule type" value="mRNA"/>
</dbReference>
<dbReference type="EMBL" id="AE014298">
    <property type="protein sequence ID" value="AAF48037.2"/>
    <property type="molecule type" value="Genomic_DNA"/>
</dbReference>
<dbReference type="EMBL" id="AE014298">
    <property type="protein sequence ID" value="AAF48038.2"/>
    <property type="molecule type" value="Genomic_DNA"/>
</dbReference>
<dbReference type="EMBL" id="AE014298">
    <property type="protein sequence ID" value="AAF48039.2"/>
    <property type="molecule type" value="Genomic_DNA"/>
</dbReference>
<dbReference type="EMBL" id="AE014298">
    <property type="protein sequence ID" value="AAN09630.1"/>
    <property type="molecule type" value="Genomic_DNA"/>
</dbReference>
<dbReference type="EMBL" id="AE014298">
    <property type="protein sequence ID" value="AAS65308.1"/>
    <property type="molecule type" value="Genomic_DNA"/>
</dbReference>
<dbReference type="EMBL" id="AE014298">
    <property type="protein sequence ID" value="AAS65309.1"/>
    <property type="molecule type" value="Genomic_DNA"/>
</dbReference>
<dbReference type="EMBL" id="AE014298">
    <property type="protein sequence ID" value="AAS65310.1"/>
    <property type="molecule type" value="Genomic_DNA"/>
</dbReference>
<dbReference type="EMBL" id="AE014298">
    <property type="protein sequence ID" value="AAS65311.1"/>
    <property type="molecule type" value="Genomic_DNA"/>
</dbReference>
<dbReference type="EMBL" id="AE014298">
    <property type="protein sequence ID" value="AAS65312.1"/>
    <property type="molecule type" value="Genomic_DNA"/>
</dbReference>
<dbReference type="EMBL" id="AE014298">
    <property type="protein sequence ID" value="AAS65313.1"/>
    <property type="molecule type" value="Genomic_DNA"/>
</dbReference>
<dbReference type="EMBL" id="AE014298">
    <property type="protein sequence ID" value="ABW09394.1"/>
    <property type="molecule type" value="Genomic_DNA"/>
</dbReference>
<dbReference type="EMBL" id="AE014298">
    <property type="protein sequence ID" value="ABW09395.1"/>
    <property type="molecule type" value="Genomic_DNA"/>
</dbReference>
<dbReference type="EMBL" id="AY059433">
    <property type="protein sequence ID" value="AAL13339.1"/>
    <property type="molecule type" value="mRNA"/>
</dbReference>
<dbReference type="EMBL" id="AY069408">
    <property type="protein sequence ID" value="AAL39553.1"/>
    <property type="status" value="ALT_INIT"/>
    <property type="molecule type" value="mRNA"/>
</dbReference>
<dbReference type="EMBL" id="AY075410">
    <property type="protein sequence ID" value="AAL68235.1"/>
    <property type="molecule type" value="mRNA"/>
</dbReference>
<dbReference type="EMBL" id="BT099726">
    <property type="protein sequence ID" value="ACV53090.1"/>
    <property type="molecule type" value="mRNA"/>
</dbReference>
<dbReference type="PIR" id="A39651">
    <property type="entry name" value="A39651"/>
</dbReference>
<dbReference type="RefSeq" id="NP_001096955.1">
    <molecule id="P31007-9"/>
    <property type="nucleotide sequence ID" value="NM_001103485.3"/>
</dbReference>
<dbReference type="RefSeq" id="NP_001096956.1">
    <molecule id="P31007-8"/>
    <property type="nucleotide sequence ID" value="NM_001103486.3"/>
</dbReference>
<dbReference type="RefSeq" id="NP_001162719.1">
    <molecule id="P31007-1"/>
    <property type="nucleotide sequence ID" value="NM_001169248.2"/>
</dbReference>
<dbReference type="RefSeq" id="NP_001245623.1">
    <molecule id="P31007-5"/>
    <property type="nucleotide sequence ID" value="NM_001258694.2"/>
</dbReference>
<dbReference type="RefSeq" id="NP_001259447.1">
    <molecule id="P31007-1"/>
    <property type="nucleotide sequence ID" value="NM_001272518.1"/>
</dbReference>
<dbReference type="RefSeq" id="NP_511120.2">
    <molecule id="P31007-1"/>
    <property type="nucleotide sequence ID" value="NM_078565.5"/>
</dbReference>
<dbReference type="RefSeq" id="NP_727518.1">
    <molecule id="P31007-7"/>
    <property type="nucleotide sequence ID" value="NM_167280.2"/>
</dbReference>
<dbReference type="RefSeq" id="NP_727519.1">
    <molecule id="P31007-4"/>
    <property type="nucleotide sequence ID" value="NM_167281.2"/>
</dbReference>
<dbReference type="RefSeq" id="NP_727520.1">
    <molecule id="P31007-3"/>
    <property type="nucleotide sequence ID" value="NM_167282.4"/>
</dbReference>
<dbReference type="RefSeq" id="NP_996402.1">
    <molecule id="P31007-7"/>
    <property type="nucleotide sequence ID" value="NM_206679.2"/>
</dbReference>
<dbReference type="RefSeq" id="NP_996403.1">
    <molecule id="P31007-7"/>
    <property type="nucleotide sequence ID" value="NM_206680.2"/>
</dbReference>
<dbReference type="RefSeq" id="NP_996404.1">
    <molecule id="P31007-6"/>
    <property type="nucleotide sequence ID" value="NM_206681.4"/>
</dbReference>
<dbReference type="RefSeq" id="NP_996405.1">
    <molecule id="P31007-5"/>
    <property type="nucleotide sequence ID" value="NM_206682.4"/>
</dbReference>
<dbReference type="RefSeq" id="NP_996406.1">
    <molecule id="P31007-2"/>
    <property type="nucleotide sequence ID" value="NM_206683.4"/>
</dbReference>
<dbReference type="RefSeq" id="NP_996407.1">
    <molecule id="P31007-1"/>
    <property type="nucleotide sequence ID" value="NM_206684.4"/>
</dbReference>
<dbReference type="PDB" id="3TVT">
    <property type="method" value="X-ray"/>
    <property type="resolution" value="1.60 A"/>
    <property type="chains" value="A=618-970"/>
</dbReference>
<dbReference type="PDB" id="4RP3">
    <property type="method" value="X-ray"/>
    <property type="resolution" value="1.36 A"/>
    <property type="chains" value="A/B=1-97"/>
</dbReference>
<dbReference type="PDB" id="4RP4">
    <property type="method" value="X-ray"/>
    <property type="resolution" value="1.42 A"/>
    <property type="chains" value="A/B=1-97"/>
</dbReference>
<dbReference type="PDB" id="4RP5">
    <property type="method" value="X-ray"/>
    <property type="resolution" value="1.65 A"/>
    <property type="chains" value="A/B=1-97"/>
</dbReference>
<dbReference type="PDBsum" id="3TVT"/>
<dbReference type="PDBsum" id="4RP3"/>
<dbReference type="PDBsum" id="4RP4"/>
<dbReference type="PDBsum" id="4RP5"/>
<dbReference type="SMR" id="P31007"/>
<dbReference type="BioGRID" id="58494">
    <property type="interactions" value="67"/>
</dbReference>
<dbReference type="ComplexPortal" id="CPX-2410">
    <property type="entry name" value="Scribble cell polarity complex"/>
</dbReference>
<dbReference type="DIP" id="DIP-31531N"/>
<dbReference type="FunCoup" id="P31007">
    <property type="interactions" value="490"/>
</dbReference>
<dbReference type="IntAct" id="P31007">
    <property type="interactions" value="46"/>
</dbReference>
<dbReference type="MINT" id="P31007"/>
<dbReference type="STRING" id="7227.FBpp0290503"/>
<dbReference type="TCDB" id="1.H.2.1.1">
    <property type="family name" value="the invertebrate pmp22-claudin (claudin2) family"/>
</dbReference>
<dbReference type="iPTMnet" id="P31007"/>
<dbReference type="PaxDb" id="7227-FBpp0290503"/>
<dbReference type="DNASU" id="32083"/>
<dbReference type="EnsemblMetazoa" id="FBtr0073483">
    <molecule id="P31007-7"/>
    <property type="protein sequence ID" value="FBpp0073339"/>
    <property type="gene ID" value="FBgn0001624"/>
</dbReference>
<dbReference type="EnsemblMetazoa" id="FBtr0073484">
    <molecule id="P31007-4"/>
    <property type="protein sequence ID" value="FBpp0073340"/>
    <property type="gene ID" value="FBgn0001624"/>
</dbReference>
<dbReference type="EnsemblMetazoa" id="FBtr0073485">
    <molecule id="P31007-1"/>
    <property type="protein sequence ID" value="FBpp0073341"/>
    <property type="gene ID" value="FBgn0001624"/>
</dbReference>
<dbReference type="EnsemblMetazoa" id="FBtr0073486">
    <molecule id="P31007-3"/>
    <property type="protein sequence ID" value="FBpp0073342"/>
    <property type="gene ID" value="FBgn0001624"/>
</dbReference>
<dbReference type="EnsemblMetazoa" id="FBtr0073487">
    <molecule id="P31007-1"/>
    <property type="protein sequence ID" value="FBpp0089350"/>
    <property type="gene ID" value="FBgn0001624"/>
</dbReference>
<dbReference type="EnsemblMetazoa" id="FBtr0073488">
    <molecule id="P31007-2"/>
    <property type="protein sequence ID" value="FBpp0089351"/>
    <property type="gene ID" value="FBgn0001624"/>
</dbReference>
<dbReference type="EnsemblMetazoa" id="FBtr0073489">
    <molecule id="P31007-5"/>
    <property type="protein sequence ID" value="FBpp0089352"/>
    <property type="gene ID" value="FBgn0001624"/>
</dbReference>
<dbReference type="EnsemblMetazoa" id="FBtr0073490">
    <molecule id="P31007-6"/>
    <property type="protein sequence ID" value="FBpp0089353"/>
    <property type="gene ID" value="FBgn0001624"/>
</dbReference>
<dbReference type="EnsemblMetazoa" id="FBtr0073491">
    <molecule id="P31007-7"/>
    <property type="protein sequence ID" value="FBpp0089348"/>
    <property type="gene ID" value="FBgn0001624"/>
</dbReference>
<dbReference type="EnsemblMetazoa" id="FBtr0073492">
    <molecule id="P31007-7"/>
    <property type="protein sequence ID" value="FBpp0089349"/>
    <property type="gene ID" value="FBgn0001624"/>
</dbReference>
<dbReference type="EnsemblMetazoa" id="FBtr0112812">
    <molecule id="P31007-9"/>
    <property type="protein sequence ID" value="FBpp0111724"/>
    <property type="gene ID" value="FBgn0001624"/>
</dbReference>
<dbReference type="EnsemblMetazoa" id="FBtr0112813">
    <molecule id="P31007-8"/>
    <property type="protein sequence ID" value="FBpp0111725"/>
    <property type="gene ID" value="FBgn0001624"/>
</dbReference>
<dbReference type="EnsemblMetazoa" id="FBtr0301289">
    <molecule id="P31007-1"/>
    <property type="protein sequence ID" value="FBpp0290504"/>
    <property type="gene ID" value="FBgn0001624"/>
</dbReference>
<dbReference type="EnsemblMetazoa" id="FBtr0308089">
    <molecule id="P31007-5"/>
    <property type="protein sequence ID" value="FBpp0300432"/>
    <property type="gene ID" value="FBgn0001624"/>
</dbReference>
<dbReference type="EnsemblMetazoa" id="FBtr0333261">
    <molecule id="P31007-1"/>
    <property type="protein sequence ID" value="FBpp0305459"/>
    <property type="gene ID" value="FBgn0001624"/>
</dbReference>
<dbReference type="GeneID" id="32083"/>
<dbReference type="KEGG" id="dme:Dmel_CG1725"/>
<dbReference type="UCSC" id="CG1725-RE">
    <property type="organism name" value="d. melanogaster"/>
</dbReference>
<dbReference type="UCSC" id="CG1725-RI">
    <property type="organism name" value="d. melanogaster"/>
</dbReference>
<dbReference type="UCSC" id="CG1725-RK">
    <property type="organism name" value="d. melanogaster"/>
</dbReference>
<dbReference type="UCSC" id="CG1725-RL">
    <property type="organism name" value="d. melanogaster"/>
</dbReference>
<dbReference type="AGR" id="FB:FBgn0001624"/>
<dbReference type="CTD" id="1739"/>
<dbReference type="FlyBase" id="FBgn0001624">
    <property type="gene designation" value="dlg1"/>
</dbReference>
<dbReference type="VEuPathDB" id="VectorBase:FBgn0001624"/>
<dbReference type="GeneTree" id="ENSGT00940000167723"/>
<dbReference type="InParanoid" id="P31007"/>
<dbReference type="OMA" id="TNEMIGP"/>
<dbReference type="OrthoDB" id="78824at2759"/>
<dbReference type="PhylomeDB" id="P31007"/>
<dbReference type="Reactome" id="R-DME-438066">
    <property type="pathway name" value="Unblocking of NMDA receptors, glutamate binding and activation"/>
</dbReference>
<dbReference type="Reactome" id="R-DME-451308">
    <property type="pathway name" value="Activation of Ca-permeable Kainate Receptor"/>
</dbReference>
<dbReference type="Reactome" id="R-DME-5625900">
    <property type="pathway name" value="RHO GTPases activate CIT"/>
</dbReference>
<dbReference type="Reactome" id="R-DME-6794361">
    <property type="pathway name" value="Neurexins and neuroligins"/>
</dbReference>
<dbReference type="Reactome" id="R-DME-8849932">
    <property type="pathway name" value="Synaptic adhesion-like molecules"/>
</dbReference>
<dbReference type="SignaLink" id="P31007"/>
<dbReference type="BioGRID-ORCS" id="32083">
    <property type="hits" value="0 hits in 3 CRISPR screens"/>
</dbReference>
<dbReference type="ChiTaRS" id="dlg1">
    <property type="organism name" value="fly"/>
</dbReference>
<dbReference type="EvolutionaryTrace" id="P31007"/>
<dbReference type="GenomeRNAi" id="32083"/>
<dbReference type="PRO" id="PR:P31007"/>
<dbReference type="Proteomes" id="UP000000803">
    <property type="component" value="Chromosome X"/>
</dbReference>
<dbReference type="Bgee" id="FBgn0001624">
    <property type="expression patterns" value="Expressed in alpha'/beta' Kenyon cell (Drosophila) in insect head and 286 other cell types or tissues"/>
</dbReference>
<dbReference type="ExpressionAtlas" id="P31007">
    <property type="expression patterns" value="baseline and differential"/>
</dbReference>
<dbReference type="GO" id="GO:0045179">
    <property type="term" value="C:apical cortex"/>
    <property type="evidence" value="ECO:0000314"/>
    <property type="project" value="FlyBase"/>
</dbReference>
<dbReference type="GO" id="GO:0016327">
    <property type="term" value="C:apicolateral plasma membrane"/>
    <property type="evidence" value="ECO:0000314"/>
    <property type="project" value="FlyBase"/>
</dbReference>
<dbReference type="GO" id="GO:0016323">
    <property type="term" value="C:basolateral plasma membrane"/>
    <property type="evidence" value="ECO:0000318"/>
    <property type="project" value="GO_Central"/>
</dbReference>
<dbReference type="GO" id="GO:0005938">
    <property type="term" value="C:cell cortex"/>
    <property type="evidence" value="ECO:0000314"/>
    <property type="project" value="FlyBase"/>
</dbReference>
<dbReference type="GO" id="GO:0005856">
    <property type="term" value="C:cytoskeleton"/>
    <property type="evidence" value="ECO:0007669"/>
    <property type="project" value="UniProtKB-SubCell"/>
</dbReference>
<dbReference type="GO" id="GO:0016328">
    <property type="term" value="C:lateral plasma membrane"/>
    <property type="evidence" value="ECO:0000314"/>
    <property type="project" value="FlyBase"/>
</dbReference>
<dbReference type="GO" id="GO:0031256">
    <property type="term" value="C:leading edge membrane"/>
    <property type="evidence" value="ECO:0000314"/>
    <property type="project" value="FlyBase"/>
</dbReference>
<dbReference type="GO" id="GO:0031594">
    <property type="term" value="C:neuromuscular junction"/>
    <property type="evidence" value="ECO:0000314"/>
    <property type="project" value="FlyBase"/>
</dbReference>
<dbReference type="GO" id="GO:0043005">
    <property type="term" value="C:neuron projection"/>
    <property type="evidence" value="ECO:0000318"/>
    <property type="project" value="GO_Central"/>
</dbReference>
<dbReference type="GO" id="GO:0048471">
    <property type="term" value="C:perinuclear region of cytoplasm"/>
    <property type="evidence" value="ECO:0000314"/>
    <property type="project" value="FlyBase"/>
</dbReference>
<dbReference type="GO" id="GO:0005886">
    <property type="term" value="C:plasma membrane"/>
    <property type="evidence" value="ECO:0000315"/>
    <property type="project" value="FlyBase"/>
</dbReference>
<dbReference type="GO" id="GO:0098839">
    <property type="term" value="C:postsynaptic density membrane"/>
    <property type="evidence" value="ECO:0000318"/>
    <property type="project" value="GO_Central"/>
</dbReference>
<dbReference type="GO" id="GO:0045211">
    <property type="term" value="C:postsynaptic membrane"/>
    <property type="evidence" value="ECO:0000314"/>
    <property type="project" value="FlyBase"/>
</dbReference>
<dbReference type="GO" id="GO:0005918">
    <property type="term" value="C:septate junction"/>
    <property type="evidence" value="ECO:0000314"/>
    <property type="project" value="FlyBase"/>
</dbReference>
<dbReference type="GO" id="GO:0005920">
    <property type="term" value="C:smooth septate junction"/>
    <property type="evidence" value="ECO:0000314"/>
    <property type="project" value="FlyBase"/>
</dbReference>
<dbReference type="GO" id="GO:0071212">
    <property type="term" value="C:subsynaptic reticulum"/>
    <property type="evidence" value="ECO:0000314"/>
    <property type="project" value="FlyBase"/>
</dbReference>
<dbReference type="GO" id="GO:0045202">
    <property type="term" value="C:synapse"/>
    <property type="evidence" value="ECO:0000314"/>
    <property type="project" value="FlyBase"/>
</dbReference>
<dbReference type="GO" id="GO:0043195">
    <property type="term" value="C:terminal bouton"/>
    <property type="evidence" value="ECO:0000314"/>
    <property type="project" value="FlyBase"/>
</dbReference>
<dbReference type="GO" id="GO:0061689">
    <property type="term" value="C:tricellular tight junction"/>
    <property type="evidence" value="ECO:0000314"/>
    <property type="project" value="FlyBase"/>
</dbReference>
<dbReference type="GO" id="GO:0061174">
    <property type="term" value="C:type I terminal bouton"/>
    <property type="evidence" value="ECO:0000314"/>
    <property type="project" value="FlyBase"/>
</dbReference>
<dbReference type="GO" id="GO:0061176">
    <property type="term" value="C:type Ib terminal bouton"/>
    <property type="evidence" value="ECO:0000314"/>
    <property type="project" value="FlyBase"/>
</dbReference>
<dbReference type="GO" id="GO:0004385">
    <property type="term" value="F:guanylate kinase activity"/>
    <property type="evidence" value="ECO:0000304"/>
    <property type="project" value="FlyBase"/>
</dbReference>
<dbReference type="GO" id="GO:0019901">
    <property type="term" value="F:protein kinase binding"/>
    <property type="evidence" value="ECO:0000318"/>
    <property type="project" value="GO_Central"/>
</dbReference>
<dbReference type="GO" id="GO:0030714">
    <property type="term" value="P:anterior/posterior axis specification, follicular epithelium"/>
    <property type="evidence" value="ECO:0000315"/>
    <property type="project" value="BHF-UCL"/>
</dbReference>
<dbReference type="GO" id="GO:0045167">
    <property type="term" value="P:asymmetric protein localization involved in cell fate determination"/>
    <property type="evidence" value="ECO:0000315"/>
    <property type="project" value="FlyBase"/>
</dbReference>
<dbReference type="GO" id="GO:0045175">
    <property type="term" value="P:basal protein localization"/>
    <property type="evidence" value="ECO:0000315"/>
    <property type="project" value="FlyBase"/>
</dbReference>
<dbReference type="GO" id="GO:0048149">
    <property type="term" value="P:behavioral response to ethanol"/>
    <property type="evidence" value="ECO:0000315"/>
    <property type="project" value="FlyBase"/>
</dbReference>
<dbReference type="GO" id="GO:0060581">
    <property type="term" value="P:cell fate commitment involved in pattern specification"/>
    <property type="evidence" value="ECO:0000315"/>
    <property type="project" value="BHF-UCL"/>
</dbReference>
<dbReference type="GO" id="GO:0001708">
    <property type="term" value="P:cell fate specification"/>
    <property type="evidence" value="ECO:0000315"/>
    <property type="project" value="BHF-UCL"/>
</dbReference>
<dbReference type="GO" id="GO:0098609">
    <property type="term" value="P:cell-cell adhesion"/>
    <property type="evidence" value="ECO:0000318"/>
    <property type="project" value="GO_Central"/>
</dbReference>
<dbReference type="GO" id="GO:0007268">
    <property type="term" value="P:chemical synaptic transmission"/>
    <property type="evidence" value="ECO:0000315"/>
    <property type="project" value="FlyBase"/>
</dbReference>
<dbReference type="GO" id="GO:0007391">
    <property type="term" value="P:dorsal closure"/>
    <property type="evidence" value="ECO:0000304"/>
    <property type="project" value="FlyBase"/>
</dbReference>
<dbReference type="GO" id="GO:0010669">
    <property type="term" value="P:epithelial structure maintenance"/>
    <property type="evidence" value="ECO:0000250"/>
    <property type="project" value="UniProtKB"/>
</dbReference>
<dbReference type="GO" id="GO:0000132">
    <property type="term" value="P:establishment of mitotic spindle orientation"/>
    <property type="evidence" value="ECO:0000316"/>
    <property type="project" value="FlyBase"/>
</dbReference>
<dbReference type="GO" id="GO:0051294">
    <property type="term" value="P:establishment of spindle orientation"/>
    <property type="evidence" value="ECO:0000315"/>
    <property type="project" value="FlyBase"/>
</dbReference>
<dbReference type="GO" id="GO:0045197">
    <property type="term" value="P:establishment or maintenance of epithelial cell apical/basal polarity"/>
    <property type="evidence" value="ECO:0000318"/>
    <property type="project" value="GO_Central"/>
</dbReference>
<dbReference type="GO" id="GO:0016334">
    <property type="term" value="P:establishment or maintenance of polarity of follicular epithelium"/>
    <property type="evidence" value="ECO:0000316"/>
    <property type="project" value="FlyBase"/>
</dbReference>
<dbReference type="GO" id="GO:0016336">
    <property type="term" value="P:establishment or maintenance of polarity of larval imaginal disc epithelium"/>
    <property type="evidence" value="ECO:0000315"/>
    <property type="project" value="FlyBase"/>
</dbReference>
<dbReference type="GO" id="GO:0030707">
    <property type="term" value="P:follicle cell of egg chamber development"/>
    <property type="evidence" value="ECO:0000315"/>
    <property type="project" value="BHF-UCL"/>
</dbReference>
<dbReference type="GO" id="GO:0042332">
    <property type="term" value="P:gravitaxis"/>
    <property type="evidence" value="ECO:0000315"/>
    <property type="project" value="FlyBase"/>
</dbReference>
<dbReference type="GO" id="GO:0045475">
    <property type="term" value="P:locomotor rhythm"/>
    <property type="evidence" value="ECO:0000315"/>
    <property type="project" value="FlyBase"/>
</dbReference>
<dbReference type="GO" id="GO:0008049">
    <property type="term" value="P:male courtship behavior"/>
    <property type="evidence" value="ECO:0000315"/>
    <property type="project" value="FlyBase"/>
</dbReference>
<dbReference type="GO" id="GO:0007617">
    <property type="term" value="P:mating behavior"/>
    <property type="evidence" value="ECO:0000315"/>
    <property type="project" value="FlyBase"/>
</dbReference>
<dbReference type="GO" id="GO:0001738">
    <property type="term" value="P:morphogenesis of a polarized epithelium"/>
    <property type="evidence" value="ECO:0000304"/>
    <property type="project" value="FlyBase"/>
</dbReference>
<dbReference type="GO" id="GO:0016333">
    <property type="term" value="P:morphogenesis of follicular epithelium"/>
    <property type="evidence" value="ECO:0000315"/>
    <property type="project" value="FlyBase"/>
</dbReference>
<dbReference type="GO" id="GO:0016335">
    <property type="term" value="P:morphogenesis of larval imaginal disc epithelium"/>
    <property type="evidence" value="ECO:0000304"/>
    <property type="project" value="FlyBase"/>
</dbReference>
<dbReference type="GO" id="GO:0045571">
    <property type="term" value="P:negative regulation of imaginal disc growth"/>
    <property type="evidence" value="ECO:0000315"/>
    <property type="project" value="FlyBase"/>
</dbReference>
<dbReference type="GO" id="GO:0061060">
    <property type="term" value="P:negative regulation of peptidoglycan recognition protein signaling pathway"/>
    <property type="evidence" value="ECO:0000315"/>
    <property type="project" value="FlyBase"/>
</dbReference>
<dbReference type="GO" id="GO:0007399">
    <property type="term" value="P:nervous system development"/>
    <property type="evidence" value="ECO:0000315"/>
    <property type="project" value="FlyBase"/>
</dbReference>
<dbReference type="GO" id="GO:0007318">
    <property type="term" value="P:pole plasm protein localization"/>
    <property type="evidence" value="ECO:0000315"/>
    <property type="project" value="BHF-UCL"/>
</dbReference>
<dbReference type="GO" id="GO:0046956">
    <property type="term" value="P:positive phototaxis"/>
    <property type="evidence" value="ECO:0000315"/>
    <property type="project" value="FlyBase"/>
</dbReference>
<dbReference type="GO" id="GO:0045887">
    <property type="term" value="P:positive regulation of synaptic assembly at neuromuscular junction"/>
    <property type="evidence" value="ECO:0000315"/>
    <property type="project" value="FlyBase"/>
</dbReference>
<dbReference type="GO" id="GO:0035418">
    <property type="term" value="P:protein localization to synapse"/>
    <property type="evidence" value="ECO:0000318"/>
    <property type="project" value="GO_Central"/>
</dbReference>
<dbReference type="GO" id="GO:0043113">
    <property type="term" value="P:receptor clustering"/>
    <property type="evidence" value="ECO:0000318"/>
    <property type="project" value="GO_Central"/>
</dbReference>
<dbReference type="GO" id="GO:0097120">
    <property type="term" value="P:receptor localization to synapse"/>
    <property type="evidence" value="ECO:0000318"/>
    <property type="project" value="GO_Central"/>
</dbReference>
<dbReference type="GO" id="GO:0042058">
    <property type="term" value="P:regulation of epidermal growth factor receptor signaling pathway"/>
    <property type="evidence" value="ECO:0000315"/>
    <property type="project" value="BHF-UCL"/>
</dbReference>
<dbReference type="GO" id="GO:0099072">
    <property type="term" value="P:regulation of postsynaptic membrane neurotransmitter receptor levels"/>
    <property type="evidence" value="ECO:0000318"/>
    <property type="project" value="GO_Central"/>
</dbReference>
<dbReference type="GO" id="GO:0019991">
    <property type="term" value="P:septate junction assembly"/>
    <property type="evidence" value="ECO:0000304"/>
    <property type="project" value="FlyBase"/>
</dbReference>
<dbReference type="GO" id="GO:0007165">
    <property type="term" value="P:signal transduction"/>
    <property type="evidence" value="ECO:0007669"/>
    <property type="project" value="UniProtKB-KW"/>
</dbReference>
<dbReference type="GO" id="GO:0051124">
    <property type="term" value="P:synaptic assembly at neuromuscular junction"/>
    <property type="evidence" value="ECO:0000315"/>
    <property type="project" value="FlyBase"/>
</dbReference>
<dbReference type="CDD" id="cd00071">
    <property type="entry name" value="GMPK"/>
    <property type="match status" value="1"/>
</dbReference>
<dbReference type="CDD" id="cd06723">
    <property type="entry name" value="PDZ1_Dlg1-2-4-like"/>
    <property type="match status" value="1"/>
</dbReference>
<dbReference type="CDD" id="cd06724">
    <property type="entry name" value="PDZ2_Dlg1-2-4-like"/>
    <property type="match status" value="1"/>
</dbReference>
<dbReference type="CDD" id="cd06795">
    <property type="entry name" value="PDZ3_Dlg1-2-4-like"/>
    <property type="match status" value="1"/>
</dbReference>
<dbReference type="CDD" id="cd11861">
    <property type="entry name" value="SH3_DLG-like"/>
    <property type="match status" value="1"/>
</dbReference>
<dbReference type="FunFam" id="3.40.50.300:FF:001402">
    <property type="entry name" value="Discs, large homolog 3 (Drosophila)"/>
    <property type="match status" value="1"/>
</dbReference>
<dbReference type="FunFam" id="1.10.287.470:FF:000001">
    <property type="entry name" value="Disks large 1 isoform X3"/>
    <property type="match status" value="1"/>
</dbReference>
<dbReference type="FunFam" id="2.30.42.10:FF:000001">
    <property type="entry name" value="Disks large homolog 1 isoform 2"/>
    <property type="match status" value="1"/>
</dbReference>
<dbReference type="FunFam" id="3.30.63.10:FF:000001">
    <property type="entry name" value="Disks large homolog 1 isoform 2"/>
    <property type="match status" value="1"/>
</dbReference>
<dbReference type="FunFam" id="2.30.30.40:FF:000058">
    <property type="entry name" value="Disks large homolog 1 isoform X1"/>
    <property type="match status" value="1"/>
</dbReference>
<dbReference type="FunFam" id="2.30.42.10:FF:000048">
    <property type="entry name" value="disks large homolog 1 isoform X1"/>
    <property type="match status" value="1"/>
</dbReference>
<dbReference type="FunFam" id="2.30.42.10:FF:000049">
    <property type="entry name" value="disks large homolog 1 isoform X1"/>
    <property type="match status" value="1"/>
</dbReference>
<dbReference type="Gene3D" id="2.30.42.10">
    <property type="match status" value="3"/>
</dbReference>
<dbReference type="Gene3D" id="3.30.63.10">
    <property type="entry name" value="Guanylate Kinase phosphate binding domain"/>
    <property type="match status" value="1"/>
</dbReference>
<dbReference type="Gene3D" id="1.10.287.470">
    <property type="entry name" value="Helix hairpin bin"/>
    <property type="match status" value="1"/>
</dbReference>
<dbReference type="Gene3D" id="3.40.50.300">
    <property type="entry name" value="P-loop containing nucleotide triphosphate hydrolases"/>
    <property type="match status" value="1"/>
</dbReference>
<dbReference type="Gene3D" id="2.30.30.40">
    <property type="entry name" value="SH3 Domains"/>
    <property type="match status" value="2"/>
</dbReference>
<dbReference type="InterPro" id="IPR016313">
    <property type="entry name" value="DLG1-like"/>
</dbReference>
<dbReference type="InterPro" id="IPR008145">
    <property type="entry name" value="GK/Ca_channel_bsu"/>
</dbReference>
<dbReference type="InterPro" id="IPR008144">
    <property type="entry name" value="Guanylate_kin-like_dom"/>
</dbReference>
<dbReference type="InterPro" id="IPR020590">
    <property type="entry name" value="Guanylate_kinase_CS"/>
</dbReference>
<dbReference type="InterPro" id="IPR015143">
    <property type="entry name" value="L27_1"/>
</dbReference>
<dbReference type="InterPro" id="IPR004172">
    <property type="entry name" value="L27_dom"/>
</dbReference>
<dbReference type="InterPro" id="IPR036892">
    <property type="entry name" value="L27_dom_sf"/>
</dbReference>
<dbReference type="InterPro" id="IPR027417">
    <property type="entry name" value="P-loop_NTPase"/>
</dbReference>
<dbReference type="InterPro" id="IPR001478">
    <property type="entry name" value="PDZ"/>
</dbReference>
<dbReference type="InterPro" id="IPR036034">
    <property type="entry name" value="PDZ_sf"/>
</dbReference>
<dbReference type="InterPro" id="IPR036028">
    <property type="entry name" value="SH3-like_dom_sf"/>
</dbReference>
<dbReference type="InterPro" id="IPR001452">
    <property type="entry name" value="SH3_domain"/>
</dbReference>
<dbReference type="InterPro" id="IPR050614">
    <property type="entry name" value="Synaptic_Scaffolding_LAP-MAGUK"/>
</dbReference>
<dbReference type="PANTHER" id="PTHR23119">
    <property type="entry name" value="DISCS LARGE"/>
    <property type="match status" value="1"/>
</dbReference>
<dbReference type="PANTHER" id="PTHR23119:SF51">
    <property type="entry name" value="DISKS LARGE 1 TUMOR SUPPRESSOR PROTEIN"/>
    <property type="match status" value="1"/>
</dbReference>
<dbReference type="Pfam" id="PF00625">
    <property type="entry name" value="Guanylate_kin"/>
    <property type="match status" value="1"/>
</dbReference>
<dbReference type="Pfam" id="PF09058">
    <property type="entry name" value="L27_1"/>
    <property type="match status" value="1"/>
</dbReference>
<dbReference type="Pfam" id="PF00595">
    <property type="entry name" value="PDZ"/>
    <property type="match status" value="3"/>
</dbReference>
<dbReference type="Pfam" id="PF00018">
    <property type="entry name" value="SH3_1"/>
    <property type="match status" value="1"/>
</dbReference>
<dbReference type="PIRSF" id="PIRSF001741">
    <property type="entry name" value="MAGUK_DLGH"/>
    <property type="match status" value="1"/>
</dbReference>
<dbReference type="SMART" id="SM00072">
    <property type="entry name" value="GuKc"/>
    <property type="match status" value="1"/>
</dbReference>
<dbReference type="SMART" id="SM00569">
    <property type="entry name" value="L27"/>
    <property type="match status" value="1"/>
</dbReference>
<dbReference type="SMART" id="SM00228">
    <property type="entry name" value="PDZ"/>
    <property type="match status" value="3"/>
</dbReference>
<dbReference type="SMART" id="SM00326">
    <property type="entry name" value="SH3"/>
    <property type="match status" value="1"/>
</dbReference>
<dbReference type="SUPFAM" id="SSF101288">
    <property type="entry name" value="L27 domain"/>
    <property type="match status" value="1"/>
</dbReference>
<dbReference type="SUPFAM" id="SSF52540">
    <property type="entry name" value="P-loop containing nucleoside triphosphate hydrolases"/>
    <property type="match status" value="1"/>
</dbReference>
<dbReference type="SUPFAM" id="SSF50156">
    <property type="entry name" value="PDZ domain-like"/>
    <property type="match status" value="3"/>
</dbReference>
<dbReference type="SUPFAM" id="SSF50044">
    <property type="entry name" value="SH3-domain"/>
    <property type="match status" value="1"/>
</dbReference>
<dbReference type="PROSITE" id="PS00856">
    <property type="entry name" value="GUANYLATE_KINASE_1"/>
    <property type="match status" value="1"/>
</dbReference>
<dbReference type="PROSITE" id="PS50052">
    <property type="entry name" value="GUANYLATE_KINASE_2"/>
    <property type="match status" value="1"/>
</dbReference>
<dbReference type="PROSITE" id="PS51022">
    <property type="entry name" value="L27"/>
    <property type="match status" value="1"/>
</dbReference>
<dbReference type="PROSITE" id="PS50106">
    <property type="entry name" value="PDZ"/>
    <property type="match status" value="3"/>
</dbReference>
<dbReference type="PROSITE" id="PS50002">
    <property type="entry name" value="SH3"/>
    <property type="match status" value="1"/>
</dbReference>
<feature type="chain" id="PRO_0000094538" description="Disks large 1 tumor suppressor protein">
    <location>
        <begin position="1"/>
        <end position="970"/>
    </location>
</feature>
<feature type="domain" description="L27" evidence="5">
    <location>
        <begin position="4"/>
        <end position="64"/>
    </location>
</feature>
<feature type="domain" description="PDZ 1" evidence="3">
    <location>
        <begin position="216"/>
        <end position="303"/>
    </location>
</feature>
<feature type="domain" description="PDZ 2" evidence="3">
    <location>
        <begin position="330"/>
        <end position="421"/>
    </location>
</feature>
<feature type="domain" description="PDZ 3" evidence="3">
    <location>
        <begin position="506"/>
        <end position="587"/>
    </location>
</feature>
<feature type="domain" description="SH3" evidence="4">
    <location>
        <begin position="620"/>
        <end position="690"/>
    </location>
</feature>
<feature type="domain" description="Guanylate kinase-like" evidence="2">
    <location>
        <begin position="780"/>
        <end position="955"/>
    </location>
</feature>
<feature type="region of interest" description="Disordered" evidence="6">
    <location>
        <begin position="161"/>
        <end position="209"/>
    </location>
</feature>
<feature type="region of interest" description="Disordered" evidence="6">
    <location>
        <begin position="424"/>
        <end position="477"/>
    </location>
</feature>
<feature type="compositionally biased region" description="Low complexity" evidence="6">
    <location>
        <begin position="171"/>
        <end position="204"/>
    </location>
</feature>
<feature type="compositionally biased region" description="Low complexity" evidence="6">
    <location>
        <begin position="437"/>
        <end position="462"/>
    </location>
</feature>
<feature type="compositionally biased region" description="Polar residues" evidence="6">
    <location>
        <begin position="466"/>
        <end position="477"/>
    </location>
</feature>
<feature type="modified residue" description="Phosphoserine" evidence="10">
    <location>
        <position position="496"/>
    </location>
</feature>
<feature type="modified residue" description="Phosphothreonine" evidence="10">
    <location>
        <position position="714"/>
    </location>
</feature>
<feature type="splice variant" id="VSP_039402" description="In isoform K." evidence="17">
    <original>MPVKKQEAHRALELLEDYHARLSEPQDRALRIAIERVIRIFKSRLFQALLDIQEFYELTLLDDSKSIQQKTAETLQIATKWEKDGQAVKIAD</original>
    <variation>MIDWVSIVRHSRRRFSNYVGSRSPVRMRRRRRQLTAPPPQQQQQQHYHQQQQQDQHQSRERQKKDKEKEKETEKDNESGGGIGSRYACCCAN</variation>
    <location>
        <begin position="1"/>
        <end position="92"/>
    </location>
</feature>
<feature type="splice variant" id="VSP_011403" description="In isoform A." evidence="17">
    <original>MPVKKQEAHRALELLEDYHARLSEPQDRALRIAIERV</original>
    <variation>MTTRKKKRDGGGSGGGFIKKVSSLFNLDSLHKASSTK</variation>
    <location>
        <begin position="1"/>
        <end position="37"/>
    </location>
</feature>
<feature type="splice variant" id="VSP_011402" description="In isoform E and isoform G." evidence="12 14 16">
    <original>MPVKKQEAHRALELLEDYHARLSEPQDRA</original>
    <variation>MTTRKKKRDGGGSGGGFIKKVSSLFNLDS</variation>
    <location>
        <begin position="1"/>
        <end position="29"/>
    </location>
</feature>
<feature type="splice variant" id="VSP_011401" description="In isoform F." evidence="12 13">
    <original>MPVKKQE</original>
    <variation>MDSDTDSEREKSSDPNEGLLSSDDKTFHDDDEPAEDSSPADDEEEPEEEECLLPQKKAQIRCDQDQPPLVVLVQPSAEAIEVRQEIDDTNPVAVAAKASDMDGDSQLEVMEHQMETVTEPDPEPPKCPTSLRDSVRESVECFYSAQDLLEYGHMLSSTSMVRTPDVESGYFEKSESDASRDEWEGPSSSSSGAARCRLLSGISGLSVSSSSRHSAEGLRMELSRFRTMIETLERESLEKSQSELQLKAKSKAKPKPKQRSHVQDAAGESGSEQGSERGFWSTIFGQAGLAISQDEEERIADIQK</variation>
    <location>
        <begin position="1"/>
        <end position="7"/>
    </location>
</feature>
<feature type="splice variant" id="VSP_011404" description="In isoform E and isoform G." evidence="12 14 16">
    <location>
        <begin position="30"/>
        <end position="205"/>
    </location>
</feature>
<feature type="splice variant" id="VSP_011405" description="In isoform A." evidence="17">
    <location>
        <begin position="38"/>
        <end position="205"/>
    </location>
</feature>
<feature type="splice variant" id="VSP_011406" description="In isoform I, isoform H, isoform K and isoform L." evidence="12 13">
    <location>
        <begin position="93"/>
        <end position="151"/>
    </location>
</feature>
<feature type="splice variant" id="VSP_011407" description="In isoform L." evidence="13">
    <original>T</original>
    <variation>TLHKASSTK</variation>
    <location>
        <position position="205"/>
    </location>
</feature>
<feature type="splice variant" id="VSP_011408" description="In isoform I." evidence="12 13">
    <original>VNGDDSWLYEDIQLERGNSGLGFSIAGGTDNPHIGTDTSIYITKLISGGAAAADGRLSINDI</original>
    <variation>SQIQIQSLTQTYPNAHQRKRVLVSLHPHQHQHQSQIQHQHHYQLRHNNGIQAKMLKRAFEST</variation>
    <location>
        <begin position="206"/>
        <end position="267"/>
    </location>
</feature>
<feature type="splice variant" id="VSP_011409" description="In isoform I." evidence="12 13">
    <location>
        <begin position="268"/>
        <end position="970"/>
    </location>
</feature>
<feature type="splice variant" id="VSP_011411" description="In isoform F." evidence="12 13">
    <original>EPGSRYASTNVLAAVPPGTPRAVSTEDITREPRTITIQKGPQGLGFN</original>
    <variation>AFMLCYTQDDANAEGGEIIYRVELPDMEQITLIYLENNDADYRKSSI</variation>
    <location>
        <begin position="473"/>
        <end position="519"/>
    </location>
</feature>
<feature type="splice variant" id="VSP_011410" description="In isoform A, isoform E and isoform G." evidence="12 14 16">
    <original>E</original>
    <variation>GALNSMGQTVVDSPSIPQAAAAVAAAANASASASVIASNNTISNTTVTTVTATATASNSSSKLPPSLGANSSISISNSNSNSNSNNINNINSINNNNSSSSSTTATVAAATPTAASAAAAAASSPPANSFYNNASMPALPVESNQTNNRSQSPQPRQ</variation>
    <location>
        <position position="473"/>
    </location>
</feature>
<feature type="splice variant" id="VSP_011412" description="In isoform F." evidence="12 13">
    <location>
        <begin position="520"/>
        <end position="970"/>
    </location>
</feature>
<feature type="splice variant" id="VSP_011413" description="In isoform G." evidence="12 16">
    <original>P</original>
    <variation>PNGVVSSTSEIDINNVNNNQSNEPQP</variation>
    <location>
        <position position="746"/>
    </location>
</feature>
<feature type="splice variant" id="VSP_011414" description="In isoform A and isoform E." evidence="14">
    <original>FMLCYTQDDANAEGA</original>
    <variation>NGVVSSTSEIDINNVNNNQSNEPQP</variation>
    <location>
        <begin position="747"/>
        <end position="761"/>
    </location>
</feature>
<feature type="splice variant" id="VSP_011415" description="In isoform L." evidence="13">
    <original>A</original>
    <variation>GEIIYRVELPDMEQITLIYLENNDADYP</variation>
    <location>
        <position position="761"/>
    </location>
</feature>
<feature type="sequence conflict" description="In Ref. 1; AAA28468 and 2; AAQ01226." evidence="17" ref="1 2">
    <original>M</original>
    <variation>T</variation>
    <location>
        <position position="365"/>
    </location>
</feature>
<feature type="sequence conflict" description="In Ref. 1; AAA28468 and 2; AAQ01226." evidence="17" ref="1 2">
    <original>A</original>
    <variation>R</variation>
    <location>
        <position position="369"/>
    </location>
</feature>
<feature type="sequence conflict" description="In Ref. 6; ACV53090." evidence="17" ref="6">
    <original>E</original>
    <variation>G</variation>
    <location>
        <position position="395"/>
    </location>
</feature>
<feature type="helix" evidence="19">
    <location>
        <begin position="8"/>
        <end position="10"/>
    </location>
</feature>
<feature type="helix" evidence="19">
    <location>
        <begin position="11"/>
        <end position="21"/>
    </location>
</feature>
<feature type="helix" evidence="19">
    <location>
        <begin position="25"/>
        <end position="27"/>
    </location>
</feature>
<feature type="helix" evidence="19">
    <location>
        <begin position="28"/>
        <end position="58"/>
    </location>
</feature>
<feature type="turn" evidence="19">
    <location>
        <begin position="59"/>
        <end position="61"/>
    </location>
</feature>
<feature type="helix" evidence="19">
    <location>
        <begin position="67"/>
        <end position="83"/>
    </location>
</feature>
<feature type="helix" evidence="19">
    <location>
        <begin position="84"/>
        <end position="86"/>
    </location>
</feature>
<feature type="strand" evidence="19">
    <location>
        <begin position="87"/>
        <end position="90"/>
    </location>
</feature>
<feature type="strand" evidence="18">
    <location>
        <begin position="624"/>
        <end position="627"/>
    </location>
</feature>
<feature type="strand" evidence="18">
    <location>
        <begin position="651"/>
        <end position="656"/>
    </location>
</feature>
<feature type="strand" evidence="18">
    <location>
        <begin position="659"/>
        <end position="665"/>
    </location>
</feature>
<feature type="strand" evidence="18">
    <location>
        <begin position="679"/>
        <end position="681"/>
    </location>
</feature>
<feature type="helix" evidence="18">
    <location>
        <begin position="683"/>
        <end position="691"/>
    </location>
</feature>
<feature type="strand" evidence="18">
    <location>
        <begin position="769"/>
        <end position="776"/>
    </location>
</feature>
<feature type="strand" evidence="18">
    <location>
        <begin position="783"/>
        <end position="787"/>
    </location>
</feature>
<feature type="helix" evidence="18">
    <location>
        <begin position="790"/>
        <end position="800"/>
    </location>
</feature>
<feature type="turn" evidence="18">
    <location>
        <begin position="802"/>
        <end position="804"/>
    </location>
</feature>
<feature type="turn" evidence="18">
    <location>
        <begin position="822"/>
        <end position="824"/>
    </location>
</feature>
<feature type="helix" evidence="18">
    <location>
        <begin position="832"/>
        <end position="840"/>
    </location>
</feature>
<feature type="strand" evidence="18">
    <location>
        <begin position="844"/>
        <end position="850"/>
    </location>
</feature>
<feature type="strand" evidence="18">
    <location>
        <begin position="853"/>
        <end position="858"/>
    </location>
</feature>
<feature type="helix" evidence="18">
    <location>
        <begin position="859"/>
        <end position="868"/>
    </location>
</feature>
<feature type="strand" evidence="18">
    <location>
        <begin position="871"/>
        <end position="874"/>
    </location>
</feature>
<feature type="helix" evidence="18">
    <location>
        <begin position="879"/>
        <end position="886"/>
    </location>
</feature>
<feature type="strand" evidence="18">
    <location>
        <begin position="892"/>
        <end position="896"/>
    </location>
</feature>
<feature type="helix" evidence="18">
    <location>
        <begin position="901"/>
        <end position="906"/>
    </location>
</feature>
<feature type="helix" evidence="18">
    <location>
        <begin position="915"/>
        <end position="930"/>
    </location>
</feature>
<feature type="turn" evidence="18">
    <location>
        <begin position="931"/>
        <end position="933"/>
    </location>
</feature>
<feature type="strand" evidence="18">
    <location>
        <begin position="935"/>
        <end position="938"/>
    </location>
</feature>
<feature type="helix" evidence="18">
    <location>
        <begin position="943"/>
        <end position="957"/>
    </location>
</feature>
<feature type="strand" evidence="18">
    <location>
        <begin position="960"/>
        <end position="965"/>
    </location>
</feature>
<feature type="sequence conflict" description="In Ref. 1; AAA28468." evidence="17" ref="1">
    <original>S</original>
    <variation>D</variation>
    <location sequence="P31007-1">
        <position position="355"/>
    </location>
</feature>
<keyword id="KW-0002">3D-structure</keyword>
<keyword id="KW-0025">Alternative splicing</keyword>
<keyword id="KW-0130">Cell adhesion</keyword>
<keyword id="KW-0965">Cell junction</keyword>
<keyword id="KW-1003">Cell membrane</keyword>
<keyword id="KW-0963">Cytoplasm</keyword>
<keyword id="KW-0206">Cytoskeleton</keyword>
<keyword id="KW-0217">Developmental protein</keyword>
<keyword id="KW-0221">Differentiation</keyword>
<keyword id="KW-0472">Membrane</keyword>
<keyword id="KW-0524">Neurogenesis</keyword>
<keyword id="KW-0597">Phosphoprotein</keyword>
<keyword id="KW-1185">Reference proteome</keyword>
<keyword id="KW-0677">Repeat</keyword>
<keyword id="KW-0728">SH3 domain</keyword>
<keyword id="KW-0807">Transducer</keyword>
<evidence type="ECO:0000250" key="1">
    <source>
        <dbReference type="UniProtKB" id="Q12959"/>
    </source>
</evidence>
<evidence type="ECO:0000255" key="2">
    <source>
        <dbReference type="PROSITE-ProRule" id="PRU00100"/>
    </source>
</evidence>
<evidence type="ECO:0000255" key="3">
    <source>
        <dbReference type="PROSITE-ProRule" id="PRU00143"/>
    </source>
</evidence>
<evidence type="ECO:0000255" key="4">
    <source>
        <dbReference type="PROSITE-ProRule" id="PRU00192"/>
    </source>
</evidence>
<evidence type="ECO:0000255" key="5">
    <source>
        <dbReference type="PROSITE-ProRule" id="PRU00365"/>
    </source>
</evidence>
<evidence type="ECO:0000256" key="6">
    <source>
        <dbReference type="SAM" id="MobiDB-lite"/>
    </source>
</evidence>
<evidence type="ECO:0000269" key="7">
    <source>
    </source>
</evidence>
<evidence type="ECO:0000269" key="8">
    <source>
    </source>
</evidence>
<evidence type="ECO:0000269" key="9">
    <source>
    </source>
</evidence>
<evidence type="ECO:0000269" key="10">
    <source>
    </source>
</evidence>
<evidence type="ECO:0000269" key="11">
    <source>
    </source>
</evidence>
<evidence type="ECO:0000303" key="12">
    <source>
    </source>
</evidence>
<evidence type="ECO:0000303" key="13">
    <source>
    </source>
</evidence>
<evidence type="ECO:0000303" key="14">
    <source>
    </source>
</evidence>
<evidence type="ECO:0000303" key="15">
    <source>
    </source>
</evidence>
<evidence type="ECO:0000303" key="16">
    <source ref="6"/>
</evidence>
<evidence type="ECO:0000305" key="17"/>
<evidence type="ECO:0007829" key="18">
    <source>
        <dbReference type="PDB" id="3TVT"/>
    </source>
</evidence>
<evidence type="ECO:0007829" key="19">
    <source>
        <dbReference type="PDB" id="4RP3"/>
    </source>
</evidence>
<organism>
    <name type="scientific">Drosophila melanogaster</name>
    <name type="common">Fruit fly</name>
    <dbReference type="NCBI Taxonomy" id="7227"/>
    <lineage>
        <taxon>Eukaryota</taxon>
        <taxon>Metazoa</taxon>
        <taxon>Ecdysozoa</taxon>
        <taxon>Arthropoda</taxon>
        <taxon>Hexapoda</taxon>
        <taxon>Insecta</taxon>
        <taxon>Pterygota</taxon>
        <taxon>Neoptera</taxon>
        <taxon>Endopterygota</taxon>
        <taxon>Diptera</taxon>
        <taxon>Brachycera</taxon>
        <taxon>Muscomorpha</taxon>
        <taxon>Ephydroidea</taxon>
        <taxon>Drosophilidae</taxon>
        <taxon>Drosophila</taxon>
        <taxon>Sophophora</taxon>
    </lineage>
</organism>
<protein>
    <recommendedName>
        <fullName>Disks large 1 tumor suppressor protein</fullName>
        <shortName evidence="15">Dlg</shortName>
    </recommendedName>
</protein>
<comment type="function">
    <text evidence="7 8 9">During embryonic development, some isoforms are essential for proper neuronal differentiation and organization. Required for cell polarity; maintenance of apicobasal polarity. Plays a critical role at septate junctions in cellular growth control during larval development. The presence of a guanylate kinase domain suggests involvement in cellular adhesion as well as signal transduction to control cellular proliferation.</text>
</comment>
<comment type="interaction">
    <interactant intactId="EBI-389374">
        <id>P31007</id>
    </interactant>
    <interactant intactId="EBI-8282973">
        <id>Q4AB30</id>
        <label>gukh</label>
    </interactant>
    <organismsDiffer>false</organismsDiffer>
    <experiments>4</experiments>
</comment>
<comment type="interaction">
    <interactant intactId="EBI-389374">
        <id>P31007</id>
    </interactant>
    <interactant intactId="EBI-85074">
        <id>P08510</id>
        <label>Sh</label>
    </interactant>
    <organismsDiffer>false</organismsDiffer>
    <experiments>3</experiments>
</comment>
<comment type="interaction">
    <interactant intactId="EBI-389394">
        <id>P31007-1</id>
    </interactant>
    <interactant intactId="EBI-3414026">
        <id>Q9VE13</id>
        <label>gukh</label>
    </interactant>
    <organismsDiffer>false</organismsDiffer>
    <experiments>11</experiments>
</comment>
<comment type="subcellular location">
    <subcellularLocation>
        <location evidence="1">Cytoplasm</location>
    </subcellularLocation>
    <subcellularLocation>
        <location evidence="7 9">Cell membrane</location>
        <topology evidence="7 9">Peripheral membrane protein</topology>
        <orientation evidence="7 9">Cytoplasmic side</orientation>
    </subcellularLocation>
    <subcellularLocation>
        <location evidence="11">Basolateral cell membrane</location>
        <topology evidence="7 9">Peripheral membrane protein</topology>
        <orientation evidence="7 9">Cytoplasmic side</orientation>
    </subcellularLocation>
    <subcellularLocation>
        <location evidence="7 9">Cytoplasm</location>
        <location evidence="7 9">Cytoskeleton</location>
    </subcellularLocation>
    <subcellularLocation>
        <location evidence="7 9">Cell junction</location>
        <location evidence="7 9">Septate junction</location>
    </subcellularLocation>
    <text evidence="7">Cytoskeleton- and membrane-associated. Located at the cytoplasmic face of the membrane in the cellular blastoderm and becomes associated with septate junctions which begin to form between epithelial cells at the time of dorsal closure. In adult flies, located at the apical-lateral membrane boundary of epithelial cells.</text>
</comment>
<comment type="alternative products">
    <event type="alternative splicing"/>
    <isoform>
        <id>P31007-2</id>
        <name>B</name>
        <sequence type="displayed"/>
    </isoform>
    <isoform>
        <id>P31007-3</id>
        <name>A</name>
        <sequence type="described" ref="VSP_011403 VSP_011405 VSP_011410 VSP_011414"/>
    </isoform>
    <isoform>
        <id>P31007-1</id>
        <name>E</name>
        <name>Dlg-A</name>
        <name>D</name>
        <sequence type="described" ref="VSP_011402 VSP_011404 VSP_011410 VSP_011414"/>
    </isoform>
    <isoform>
        <id>P31007-4</id>
        <name>F</name>
        <sequence type="described" ref="VSP_011401 VSP_011411 VSP_011412"/>
    </isoform>
    <isoform>
        <id>P31007-5</id>
        <name>G</name>
        <sequence type="described" ref="VSP_011402 VSP_011404 VSP_011410 VSP_011413"/>
    </isoform>
    <isoform>
        <id>P31007-6</id>
        <name>H</name>
        <sequence type="described" ref="VSP_011406"/>
    </isoform>
    <isoform>
        <id>P31007-7</id>
        <name>I</name>
        <name>C</name>
        <name>J</name>
        <sequence type="described" ref="VSP_011406 VSP_011408 VSP_011409"/>
    </isoform>
    <isoform>
        <id>P31007-9</id>
        <name>K</name>
        <sequence type="described" ref="VSP_039402 VSP_011406"/>
    </isoform>
    <isoform>
        <id>P31007-8</id>
        <name>L</name>
        <name>S97</name>
        <sequence type="described" ref="VSP_011406 VSP_011407 VSP_011415"/>
    </isoform>
</comment>
<comment type="tissue specificity">
    <text evidence="7 8 9">During the cellular blastoderm stage, isoform B, isoform F, isoform H, isoform I and isoform L expression is localized to the cell borders. From stage 11 onwards, expression is found predominantly in the developing nervous system: axon bundles in the ventral cord and the brain. Stage 14 and 15 embryos exhibit expression in the developing body wall muscle. Expression in neuropil regions of the CNS and at NMJs persists through to larval development. Other isoforms show expression in embryonic epithelial cells. In larvae, expression is seen as a belt around salivary glands, imaginal disks and proventriculus. Expressed in adult reproductive tissues. In epithelia, coexpressed with scrib throughout development.</text>
</comment>
<comment type="developmental stage">
    <text evidence="9 11">Expressed both maternally and zygotically throughout development (PubMed:1651169). Expressed in follicular epithelium in stage 9/10 of oogenesis (PubMed:24768049).</text>
</comment>
<comment type="miscellaneous">
    <molecule>Isoform B</molecule>
    <text>Contains the N-terminal domain essential for correct neuronal development.</text>
</comment>
<comment type="miscellaneous">
    <molecule>Isoform F</molecule>
    <text evidence="17">Contains the N-terminal domain essential for correct neuronal development.</text>
</comment>
<comment type="miscellaneous">
    <molecule>Isoform H</molecule>
    <text evidence="17">Contains the N-terminal domain essential for correct neuronal development.</text>
</comment>
<comment type="miscellaneous">
    <molecule>Isoform I</molecule>
    <text evidence="17">Contains the N-terminal domain essential for correct neuronal development.</text>
</comment>
<comment type="miscellaneous">
    <molecule>Isoform L</molecule>
    <text evidence="17">Contains the N-terminal domain essential for correct neuronal development.</text>
</comment>
<comment type="similarity">
    <text evidence="17">Belongs to the MAGUK family.</text>
</comment>
<comment type="sequence caution" evidence="17">
    <conflict type="erroneous initiation">
        <sequence resource="EMBL-CDS" id="AAL39553"/>
    </conflict>
    <text>Truncated N-terminus.</text>
</comment>
<reference key="1">
    <citation type="journal article" date="1991" name="Cell">
        <title>The discs-large tumor suppressor gene of Drosophila encodes a guanylate kinase homolog localized at septate junctions.</title>
        <authorList>
            <person name="Woods D.F."/>
            <person name="Bryant P.J."/>
        </authorList>
    </citation>
    <scope>NUCLEOTIDE SEQUENCE [MRNA] (ISOFORM E)</scope>
    <scope>FUNCTION</scope>
    <scope>SUBCELLULAR LOCATION</scope>
    <scope>TISSUE SPECIFICITY</scope>
    <scope>DEVELOPMENTAL STAGE</scope>
    <source>
        <strain>Oregon-R</strain>
        <tissue>Embryo</tissue>
    </source>
</reference>
<reference key="2">
    <citation type="journal article" date="2003" name="J. Neurosci.">
        <title>Novel isoforms of Dlg are fundamental for neuronal development in Drosophila.</title>
        <authorList>
            <person name="Mendoza C."/>
            <person name="Olguin P."/>
            <person name="Lafferte G."/>
            <person name="Thomas U."/>
            <person name="Ebitsch S."/>
            <person name="Gundelfinger E.D."/>
            <person name="Kukuljan M."/>
            <person name="Sierralta J."/>
        </authorList>
    </citation>
    <scope>NUCLEOTIDE SEQUENCE [MRNA] (ISOFORMS B; F; H; I AND L)</scope>
    <scope>FUNCTION</scope>
    <scope>SUBCELLULAR LOCATION</scope>
    <scope>TISSUE SPECIFICITY</scope>
    <source>
        <tissue>Embryo</tissue>
    </source>
</reference>
<reference key="3">
    <citation type="journal article" date="2000" name="Science">
        <title>The genome sequence of Drosophila melanogaster.</title>
        <authorList>
            <person name="Adams M.D."/>
            <person name="Celniker S.E."/>
            <person name="Holt R.A."/>
            <person name="Evans C.A."/>
            <person name="Gocayne J.D."/>
            <person name="Amanatides P.G."/>
            <person name="Scherer S.E."/>
            <person name="Li P.W."/>
            <person name="Hoskins R.A."/>
            <person name="Galle R.F."/>
            <person name="George R.A."/>
            <person name="Lewis S.E."/>
            <person name="Richards S."/>
            <person name="Ashburner M."/>
            <person name="Henderson S.N."/>
            <person name="Sutton G.G."/>
            <person name="Wortman J.R."/>
            <person name="Yandell M.D."/>
            <person name="Zhang Q."/>
            <person name="Chen L.X."/>
            <person name="Brandon R.C."/>
            <person name="Rogers Y.-H.C."/>
            <person name="Blazej R.G."/>
            <person name="Champe M."/>
            <person name="Pfeiffer B.D."/>
            <person name="Wan K.H."/>
            <person name="Doyle C."/>
            <person name="Baxter E.G."/>
            <person name="Helt G."/>
            <person name="Nelson C.R."/>
            <person name="Miklos G.L.G."/>
            <person name="Abril J.F."/>
            <person name="Agbayani A."/>
            <person name="An H.-J."/>
            <person name="Andrews-Pfannkoch C."/>
            <person name="Baldwin D."/>
            <person name="Ballew R.M."/>
            <person name="Basu A."/>
            <person name="Baxendale J."/>
            <person name="Bayraktaroglu L."/>
            <person name="Beasley E.M."/>
            <person name="Beeson K.Y."/>
            <person name="Benos P.V."/>
            <person name="Berman B.P."/>
            <person name="Bhandari D."/>
            <person name="Bolshakov S."/>
            <person name="Borkova D."/>
            <person name="Botchan M.R."/>
            <person name="Bouck J."/>
            <person name="Brokstein P."/>
            <person name="Brottier P."/>
            <person name="Burtis K.C."/>
            <person name="Busam D.A."/>
            <person name="Butler H."/>
            <person name="Cadieu E."/>
            <person name="Center A."/>
            <person name="Chandra I."/>
            <person name="Cherry J.M."/>
            <person name="Cawley S."/>
            <person name="Dahlke C."/>
            <person name="Davenport L.B."/>
            <person name="Davies P."/>
            <person name="de Pablos B."/>
            <person name="Delcher A."/>
            <person name="Deng Z."/>
            <person name="Mays A.D."/>
            <person name="Dew I."/>
            <person name="Dietz S.M."/>
            <person name="Dodson K."/>
            <person name="Doup L.E."/>
            <person name="Downes M."/>
            <person name="Dugan-Rocha S."/>
            <person name="Dunkov B.C."/>
            <person name="Dunn P."/>
            <person name="Durbin K.J."/>
            <person name="Evangelista C.C."/>
            <person name="Ferraz C."/>
            <person name="Ferriera S."/>
            <person name="Fleischmann W."/>
            <person name="Fosler C."/>
            <person name="Gabrielian A.E."/>
            <person name="Garg N.S."/>
            <person name="Gelbart W.M."/>
            <person name="Glasser K."/>
            <person name="Glodek A."/>
            <person name="Gong F."/>
            <person name="Gorrell J.H."/>
            <person name="Gu Z."/>
            <person name="Guan P."/>
            <person name="Harris M."/>
            <person name="Harris N.L."/>
            <person name="Harvey D.A."/>
            <person name="Heiman T.J."/>
            <person name="Hernandez J.R."/>
            <person name="Houck J."/>
            <person name="Hostin D."/>
            <person name="Houston K.A."/>
            <person name="Howland T.J."/>
            <person name="Wei M.-H."/>
            <person name="Ibegwam C."/>
            <person name="Jalali M."/>
            <person name="Kalush F."/>
            <person name="Karpen G.H."/>
            <person name="Ke Z."/>
            <person name="Kennison J.A."/>
            <person name="Ketchum K.A."/>
            <person name="Kimmel B.E."/>
            <person name="Kodira C.D."/>
            <person name="Kraft C.L."/>
            <person name="Kravitz S."/>
            <person name="Kulp D."/>
            <person name="Lai Z."/>
            <person name="Lasko P."/>
            <person name="Lei Y."/>
            <person name="Levitsky A.A."/>
            <person name="Li J.H."/>
            <person name="Li Z."/>
            <person name="Liang Y."/>
            <person name="Lin X."/>
            <person name="Liu X."/>
            <person name="Mattei B."/>
            <person name="McIntosh T.C."/>
            <person name="McLeod M.P."/>
            <person name="McPherson D."/>
            <person name="Merkulov G."/>
            <person name="Milshina N.V."/>
            <person name="Mobarry C."/>
            <person name="Morris J."/>
            <person name="Moshrefi A."/>
            <person name="Mount S.M."/>
            <person name="Moy M."/>
            <person name="Murphy B."/>
            <person name="Murphy L."/>
            <person name="Muzny D.M."/>
            <person name="Nelson D.L."/>
            <person name="Nelson D.R."/>
            <person name="Nelson K.A."/>
            <person name="Nixon K."/>
            <person name="Nusskern D.R."/>
            <person name="Pacleb J.M."/>
            <person name="Palazzolo M."/>
            <person name="Pittman G.S."/>
            <person name="Pan S."/>
            <person name="Pollard J."/>
            <person name="Puri V."/>
            <person name="Reese M.G."/>
            <person name="Reinert K."/>
            <person name="Remington K."/>
            <person name="Saunders R.D.C."/>
            <person name="Scheeler F."/>
            <person name="Shen H."/>
            <person name="Shue B.C."/>
            <person name="Siden-Kiamos I."/>
            <person name="Simpson M."/>
            <person name="Skupski M.P."/>
            <person name="Smith T.J."/>
            <person name="Spier E."/>
            <person name="Spradling A.C."/>
            <person name="Stapleton M."/>
            <person name="Strong R."/>
            <person name="Sun E."/>
            <person name="Svirskas R."/>
            <person name="Tector C."/>
            <person name="Turner R."/>
            <person name="Venter E."/>
            <person name="Wang A.H."/>
            <person name="Wang X."/>
            <person name="Wang Z.-Y."/>
            <person name="Wassarman D.A."/>
            <person name="Weinstock G.M."/>
            <person name="Weissenbach J."/>
            <person name="Williams S.M."/>
            <person name="Woodage T."/>
            <person name="Worley K.C."/>
            <person name="Wu D."/>
            <person name="Yang S."/>
            <person name="Yao Q.A."/>
            <person name="Ye J."/>
            <person name="Yeh R.-F."/>
            <person name="Zaveri J.S."/>
            <person name="Zhan M."/>
            <person name="Zhang G."/>
            <person name="Zhao Q."/>
            <person name="Zheng L."/>
            <person name="Zheng X.H."/>
            <person name="Zhong F.N."/>
            <person name="Zhong W."/>
            <person name="Zhou X."/>
            <person name="Zhu S.C."/>
            <person name="Zhu X."/>
            <person name="Smith H.O."/>
            <person name="Gibbs R.A."/>
            <person name="Myers E.W."/>
            <person name="Rubin G.M."/>
            <person name="Venter J.C."/>
        </authorList>
    </citation>
    <scope>NUCLEOTIDE SEQUENCE [LARGE SCALE GENOMIC DNA]</scope>
    <source>
        <strain>Berkeley</strain>
    </source>
</reference>
<reference key="4">
    <citation type="journal article" date="2002" name="Genome Biol.">
        <title>Annotation of the Drosophila melanogaster euchromatic genome: a systematic review.</title>
        <authorList>
            <person name="Misra S."/>
            <person name="Crosby M.A."/>
            <person name="Mungall C.J."/>
            <person name="Matthews B.B."/>
            <person name="Campbell K.S."/>
            <person name="Hradecky P."/>
            <person name="Huang Y."/>
            <person name="Kaminker J.S."/>
            <person name="Millburn G.H."/>
            <person name="Prochnik S.E."/>
            <person name="Smith C.D."/>
            <person name="Tupy J.L."/>
            <person name="Whitfield E.J."/>
            <person name="Bayraktaroglu L."/>
            <person name="Berman B.P."/>
            <person name="Bettencourt B.R."/>
            <person name="Celniker S.E."/>
            <person name="de Grey A.D.N.J."/>
            <person name="Drysdale R.A."/>
            <person name="Harris N.L."/>
            <person name="Richter J."/>
            <person name="Russo S."/>
            <person name="Schroeder A.J."/>
            <person name="Shu S.Q."/>
            <person name="Stapleton M."/>
            <person name="Yamada C."/>
            <person name="Ashburner M."/>
            <person name="Gelbart W.M."/>
            <person name="Rubin G.M."/>
            <person name="Lewis S.E."/>
        </authorList>
    </citation>
    <scope>GENOME REANNOTATION</scope>
    <scope>ALTERNATIVE SPLICING</scope>
    <source>
        <strain>Berkeley</strain>
    </source>
</reference>
<reference key="5">
    <citation type="journal article" date="2002" name="Genome Biol.">
        <title>A Drosophila full-length cDNA resource.</title>
        <authorList>
            <person name="Stapleton M."/>
            <person name="Carlson J.W."/>
            <person name="Brokstein P."/>
            <person name="Yu C."/>
            <person name="Champe M."/>
            <person name="George R.A."/>
            <person name="Guarin H."/>
            <person name="Kronmiller B."/>
            <person name="Pacleb J.M."/>
            <person name="Park S."/>
            <person name="Wan K.H."/>
            <person name="Rubin G.M."/>
            <person name="Celniker S.E."/>
        </authorList>
    </citation>
    <scope>NUCLEOTIDE SEQUENCE [LARGE SCALE MRNA] (ISOFORMS F AND I)</scope>
    <scope>NUCLEOTIDE SEQUENCE [LARGE SCALE MRNA] OF 711-970 (ISOFORM G)</scope>
    <source>
        <strain>Berkeley</strain>
        <tissue>Embryo</tissue>
        <tissue>Head</tissue>
    </source>
</reference>
<reference key="6">
    <citation type="submission" date="2009-09" db="EMBL/GenBank/DDBJ databases">
        <authorList>
            <person name="Carlson J.W."/>
            <person name="Booth B."/>
            <person name="Frise E."/>
            <person name="Park S."/>
            <person name="Wan K.H."/>
            <person name="Yu C."/>
            <person name="Celniker S.E."/>
        </authorList>
    </citation>
    <scope>NUCLEOTIDE SEQUENCE [LARGE SCALE MRNA] (ISOFORM G)</scope>
    <source>
        <strain>Berkeley</strain>
        <tissue>Embryo</tissue>
    </source>
</reference>
<reference key="7">
    <citation type="journal article" date="2000" name="Science">
        <title>Cooperative regulation of cell polarity and growth by Drosophila tumor suppressors.</title>
        <authorList>
            <person name="Bilder D."/>
            <person name="Li M."/>
            <person name="Perrimon N."/>
        </authorList>
    </citation>
    <scope>FUNCTION</scope>
    <scope>SUBCELLULAR LOCATION</scope>
    <scope>TISSUE SPECIFICITY</scope>
</reference>
<reference key="8">
    <citation type="journal article" date="2008" name="J. Proteome Res.">
        <title>Phosphoproteome analysis of Drosophila melanogaster embryos.</title>
        <authorList>
            <person name="Zhai B."/>
            <person name="Villen J."/>
            <person name="Beausoleil S.A."/>
            <person name="Mintseris J."/>
            <person name="Gygi S.P."/>
        </authorList>
    </citation>
    <scope>PHOSPHORYLATION [LARGE SCALE ANALYSIS] AT SER-496 AND THR-714</scope>
    <scope>IDENTIFICATION BY MASS SPECTROMETRY</scope>
    <source>
        <tissue>Embryo</tissue>
    </source>
</reference>
<reference key="9">
    <citation type="journal article" date="2014" name="Curr. Biol.">
        <title>PI(4,5)P2 produced by the PI4P5K SKTL controls apical size by tethering PAR-3 in Drosophila epithelial cells.</title>
        <authorList>
            <person name="Claret S."/>
            <person name="Jouette J."/>
            <person name="Benoit B."/>
            <person name="Legent K."/>
            <person name="Guichet A."/>
        </authorList>
    </citation>
    <scope>SUBCELLULAR LOCATION</scope>
    <scope>DEVELOPMENTAL STAGE</scope>
</reference>
<accession>P31007</accession>
<accession>A4V4A8</accession>
<accession>A4V4B0</accession>
<accession>A8JUR9</accession>
<accession>A8JUS0</accession>
<accession>C7LAH6</accession>
<accession>Q7KV38</accession>
<accession>Q7KV39</accession>
<accession>Q7KV40</accession>
<accession>Q7YXH8</accession>
<accession>Q8SY37</accession>
<accession>Q8T0C6</accession>
<accession>Q95TF5</accession>
<accession>Q9VYZ4</accession>
<accession>Q9VYZ5</accession>
<accession>Q9VYZ6</accession>
<gene>
    <name type="primary">dlg1</name>
    <name type="synonym">l(1)dlg1</name>
    <name type="ORF">CG1725</name>
</gene>
<sequence>MPVKKQEAHRALELLEDYHARLSEPQDRALRIAIERVIRIFKSRLFQALLDIQEFYELTLLDDSKSIQQKTAETLQIATKWEKDGQAVKIADFIKSSNLNRNCAYEFNNDASSNQTNQSALNQNPIANNVSAQAQAEALSRTFKSELEEILNQRMRIESDTENAKEPTVEQQQKQQQAQQRSSRSPQQQNPQQQQGSKSRSGSQTVNGDDSWLYEDIQLERGNSGLGFSIAGGTDNPHIGTDTSIYITKLISGGAAAADGRLSINDIIVSVNDVSVVDVPHASAVDALKKAGNVVKLHVKRKRGTATTPAAGSAAGDARDSAASGPKVIEIDLVKGGKGLGFSIAGGIGNQHIPGDNGIYVTKLMDGGAAQVDGRLSIGDKLIAVRTNGSEKNLENVTHELAVATLKSITDKVTLIIGKTQHLTTSASGGGGGGLSSGQQLSQSQSQLATSQSQSQVHQQQHATPMVNSQSTEPGSRYASTNVLAAVPPGTPRAVSTEDITREPRTITIQKGPQGLGFNIVGGEDGQGIYVSFILAGGPADLGSELKRGDQLLSVNNVNLTHATHEEAAQALKTSGGVVTLLAQYRPEEYNRFEARIQELKQQAALGAGGSGTLLRTTQKRSLYVRALFDYDPNRDDGLPSRGLPFKHGDILHVTNASDDEWWQARRVLGDNEDEQIGIVPSKRRWERKMRARDRSVKFQGHAAANNNLDKQSTLDRKKKNFTFSRKFPFMKSRDEKNEDGSDQEPFMLCYTQDDANAEGASEENVLSYEAVQRLSINYTRPVIILGPLKDRINDDLISEYPDKFGSCVPHTTRPKREYEVDGRDYHFVSSREQMERDIQNHLFIEAGQYNDNLYGTSVASVREVAEKGKHCILDVSGNAIKRLQVAQLYPVAVFIKPKSVDSVMEMNRRMTEEQAKKTYERAIKMEQEFGEYFTGVVQGDTIEEIYSKVKSMIWSQSGPTIWVPSKESL</sequence>